<feature type="chain" id="PRO_1000050465" description="Putative pterin-4-alpha-carbinolamine dehydratase">
    <location>
        <begin position="1"/>
        <end position="95"/>
    </location>
</feature>
<proteinExistence type="inferred from homology"/>
<protein>
    <recommendedName>
        <fullName evidence="1">Putative pterin-4-alpha-carbinolamine dehydratase</fullName>
        <shortName evidence="1">PHS</shortName>
        <ecNumber evidence="1">4.2.1.96</ecNumber>
    </recommendedName>
    <alternativeName>
        <fullName evidence="1">4-alpha-hydroxy-tetrahydropterin dehydratase</fullName>
    </alternativeName>
    <alternativeName>
        <fullName evidence="1">Pterin carbinolamine dehydratase</fullName>
        <shortName evidence="1">PCD</shortName>
    </alternativeName>
</protein>
<dbReference type="EC" id="4.2.1.96" evidence="1"/>
<dbReference type="EMBL" id="CP000473">
    <property type="protein sequence ID" value="ABJ86192.1"/>
    <property type="molecule type" value="Genomic_DNA"/>
</dbReference>
<dbReference type="SMR" id="Q01VX3"/>
<dbReference type="STRING" id="234267.Acid_5239"/>
<dbReference type="KEGG" id="sus:Acid_5239"/>
<dbReference type="eggNOG" id="COG2154">
    <property type="taxonomic scope" value="Bacteria"/>
</dbReference>
<dbReference type="HOGENOM" id="CLU_081974_3_2_0"/>
<dbReference type="InParanoid" id="Q01VX3"/>
<dbReference type="OrthoDB" id="9800108at2"/>
<dbReference type="GO" id="GO:0008124">
    <property type="term" value="F:4-alpha-hydroxytetrahydrobiopterin dehydratase activity"/>
    <property type="evidence" value="ECO:0007669"/>
    <property type="project" value="UniProtKB-UniRule"/>
</dbReference>
<dbReference type="GO" id="GO:0006729">
    <property type="term" value="P:tetrahydrobiopterin biosynthetic process"/>
    <property type="evidence" value="ECO:0007669"/>
    <property type="project" value="InterPro"/>
</dbReference>
<dbReference type="CDD" id="cd00914">
    <property type="entry name" value="PCD_DCoH_subfamily_b"/>
    <property type="match status" value="1"/>
</dbReference>
<dbReference type="Gene3D" id="3.30.1360.20">
    <property type="entry name" value="Transcriptional coactivator/pterin dehydratase"/>
    <property type="match status" value="1"/>
</dbReference>
<dbReference type="HAMAP" id="MF_00434">
    <property type="entry name" value="Pterin_4_alpha"/>
    <property type="match status" value="1"/>
</dbReference>
<dbReference type="InterPro" id="IPR036428">
    <property type="entry name" value="PCD_sf"/>
</dbReference>
<dbReference type="InterPro" id="IPR001533">
    <property type="entry name" value="Pterin_deHydtase"/>
</dbReference>
<dbReference type="NCBIfam" id="NF002017">
    <property type="entry name" value="PRK00823.1-2"/>
    <property type="match status" value="1"/>
</dbReference>
<dbReference type="NCBIfam" id="NF002018">
    <property type="entry name" value="PRK00823.1-3"/>
    <property type="match status" value="1"/>
</dbReference>
<dbReference type="PANTHER" id="PTHR12599">
    <property type="entry name" value="PTERIN-4-ALPHA-CARBINOLAMINE DEHYDRATASE"/>
    <property type="match status" value="1"/>
</dbReference>
<dbReference type="PANTHER" id="PTHR12599:SF0">
    <property type="entry name" value="PTERIN-4-ALPHA-CARBINOLAMINE DEHYDRATASE"/>
    <property type="match status" value="1"/>
</dbReference>
<dbReference type="Pfam" id="PF01329">
    <property type="entry name" value="Pterin_4a"/>
    <property type="match status" value="1"/>
</dbReference>
<dbReference type="SUPFAM" id="SSF55248">
    <property type="entry name" value="PCD-like"/>
    <property type="match status" value="1"/>
</dbReference>
<reference key="1">
    <citation type="journal article" date="2009" name="Appl. Environ. Microbiol.">
        <title>Three genomes from the phylum Acidobacteria provide insight into the lifestyles of these microorganisms in soils.</title>
        <authorList>
            <person name="Ward N.L."/>
            <person name="Challacombe J.F."/>
            <person name="Janssen P.H."/>
            <person name="Henrissat B."/>
            <person name="Coutinho P.M."/>
            <person name="Wu M."/>
            <person name="Xie G."/>
            <person name="Haft D.H."/>
            <person name="Sait M."/>
            <person name="Badger J."/>
            <person name="Barabote R.D."/>
            <person name="Bradley B."/>
            <person name="Brettin T.S."/>
            <person name="Brinkac L.M."/>
            <person name="Bruce D."/>
            <person name="Creasy T."/>
            <person name="Daugherty S.C."/>
            <person name="Davidsen T.M."/>
            <person name="DeBoy R.T."/>
            <person name="Detter J.C."/>
            <person name="Dodson R.J."/>
            <person name="Durkin A.S."/>
            <person name="Ganapathy A."/>
            <person name="Gwinn-Giglio M."/>
            <person name="Han C.S."/>
            <person name="Khouri H."/>
            <person name="Kiss H."/>
            <person name="Kothari S.P."/>
            <person name="Madupu R."/>
            <person name="Nelson K.E."/>
            <person name="Nelson W.C."/>
            <person name="Paulsen I."/>
            <person name="Penn K."/>
            <person name="Ren Q."/>
            <person name="Rosovitz M.J."/>
            <person name="Selengut J.D."/>
            <person name="Shrivastava S."/>
            <person name="Sullivan S.A."/>
            <person name="Tapia R."/>
            <person name="Thompson L.S."/>
            <person name="Watkins K.L."/>
            <person name="Yang Q."/>
            <person name="Yu C."/>
            <person name="Zafar N."/>
            <person name="Zhou L."/>
            <person name="Kuske C.R."/>
        </authorList>
    </citation>
    <scope>NUCLEOTIDE SEQUENCE [LARGE SCALE GENOMIC DNA]</scope>
    <source>
        <strain>Ellin6076</strain>
    </source>
</reference>
<accession>Q01VX3</accession>
<sequence>MTTKLSESEIQSALRERSAWTVVNGKLHREYKFADFIHAFGFMTCAALSAEAMNHHPEWFNVYNRLTIDLTTHDAGGITAKDFQLAAKLDALAAG</sequence>
<comment type="catalytic activity">
    <reaction evidence="1">
        <text>(4aS,6R)-4a-hydroxy-L-erythro-5,6,7,8-tetrahydrobiopterin = (6R)-L-erythro-6,7-dihydrobiopterin + H2O</text>
        <dbReference type="Rhea" id="RHEA:11920"/>
        <dbReference type="ChEBI" id="CHEBI:15377"/>
        <dbReference type="ChEBI" id="CHEBI:15642"/>
        <dbReference type="ChEBI" id="CHEBI:43120"/>
        <dbReference type="EC" id="4.2.1.96"/>
    </reaction>
</comment>
<comment type="similarity">
    <text evidence="1">Belongs to the pterin-4-alpha-carbinolamine dehydratase family.</text>
</comment>
<name>PHS_SOLUE</name>
<gene>
    <name type="ordered locus">Acid_5239</name>
</gene>
<organism>
    <name type="scientific">Solibacter usitatus (strain Ellin6076)</name>
    <dbReference type="NCBI Taxonomy" id="234267"/>
    <lineage>
        <taxon>Bacteria</taxon>
        <taxon>Pseudomonadati</taxon>
        <taxon>Acidobacteriota</taxon>
        <taxon>Terriglobia</taxon>
        <taxon>Bryobacterales</taxon>
        <taxon>Solibacteraceae</taxon>
        <taxon>Candidatus Solibacter</taxon>
    </lineage>
</organism>
<evidence type="ECO:0000255" key="1">
    <source>
        <dbReference type="HAMAP-Rule" id="MF_00434"/>
    </source>
</evidence>
<keyword id="KW-0456">Lyase</keyword>